<protein>
    <recommendedName>
        <fullName evidence="1">Acetyl-coenzyme A carboxylase carboxyl transferase subunit alpha</fullName>
        <shortName evidence="1">ACCase subunit alpha</shortName>
        <shortName evidence="1">Acetyl-CoA carboxylase carboxyltransferase subunit alpha</shortName>
        <ecNumber evidence="1">2.1.3.15</ecNumber>
    </recommendedName>
</protein>
<name>ACCA_THET2</name>
<organism>
    <name type="scientific">Thermus thermophilus (strain ATCC BAA-163 / DSM 7039 / HB27)</name>
    <dbReference type="NCBI Taxonomy" id="262724"/>
    <lineage>
        <taxon>Bacteria</taxon>
        <taxon>Thermotogati</taxon>
        <taxon>Deinococcota</taxon>
        <taxon>Deinococci</taxon>
        <taxon>Thermales</taxon>
        <taxon>Thermaceae</taxon>
        <taxon>Thermus</taxon>
    </lineage>
</organism>
<keyword id="KW-0067">ATP-binding</keyword>
<keyword id="KW-0963">Cytoplasm</keyword>
<keyword id="KW-0275">Fatty acid biosynthesis</keyword>
<keyword id="KW-0276">Fatty acid metabolism</keyword>
<keyword id="KW-0444">Lipid biosynthesis</keyword>
<keyword id="KW-0443">Lipid metabolism</keyword>
<keyword id="KW-0547">Nucleotide-binding</keyword>
<keyword id="KW-0808">Transferase</keyword>
<feature type="chain" id="PRO_0000223843" description="Acetyl-coenzyme A carboxylase carboxyl transferase subunit alpha">
    <location>
        <begin position="1"/>
        <end position="312"/>
    </location>
</feature>
<feature type="domain" description="CoA carboxyltransferase C-terminal" evidence="2">
    <location>
        <begin position="32"/>
        <end position="286"/>
    </location>
</feature>
<accession>Q72HS8</accession>
<proteinExistence type="inferred from homology"/>
<evidence type="ECO:0000255" key="1">
    <source>
        <dbReference type="HAMAP-Rule" id="MF_00823"/>
    </source>
</evidence>
<evidence type="ECO:0000255" key="2">
    <source>
        <dbReference type="PROSITE-ProRule" id="PRU01137"/>
    </source>
</evidence>
<comment type="function">
    <text evidence="1">Component of the acetyl coenzyme A carboxylase (ACC) complex. First, biotin carboxylase catalyzes the carboxylation of biotin on its carrier protein (BCCP) and then the CO(2) group is transferred by the carboxyltransferase to acetyl-CoA to form malonyl-CoA.</text>
</comment>
<comment type="catalytic activity">
    <reaction evidence="1">
        <text>N(6)-carboxybiotinyl-L-lysyl-[protein] + acetyl-CoA = N(6)-biotinyl-L-lysyl-[protein] + malonyl-CoA</text>
        <dbReference type="Rhea" id="RHEA:54728"/>
        <dbReference type="Rhea" id="RHEA-COMP:10505"/>
        <dbReference type="Rhea" id="RHEA-COMP:10506"/>
        <dbReference type="ChEBI" id="CHEBI:57288"/>
        <dbReference type="ChEBI" id="CHEBI:57384"/>
        <dbReference type="ChEBI" id="CHEBI:83144"/>
        <dbReference type="ChEBI" id="CHEBI:83145"/>
        <dbReference type="EC" id="2.1.3.15"/>
    </reaction>
</comment>
<comment type="pathway">
    <text evidence="1">Lipid metabolism; malonyl-CoA biosynthesis; malonyl-CoA from acetyl-CoA: step 1/1.</text>
</comment>
<comment type="subunit">
    <text evidence="1">Acetyl-CoA carboxylase is a heterohexamer composed of biotin carboxyl carrier protein (AccB), biotin carboxylase (AccC) and two subunits each of ACCase subunit alpha (AccA) and ACCase subunit beta (AccD).</text>
</comment>
<comment type="subcellular location">
    <subcellularLocation>
        <location evidence="1">Cytoplasm</location>
    </subcellularLocation>
</comment>
<comment type="similarity">
    <text evidence="1">Belongs to the AccA family.</text>
</comment>
<dbReference type="EC" id="2.1.3.15" evidence="1"/>
<dbReference type="EMBL" id="AE017221">
    <property type="protein sequence ID" value="AAS81750.1"/>
    <property type="molecule type" value="Genomic_DNA"/>
</dbReference>
<dbReference type="SMR" id="Q72HS8"/>
<dbReference type="KEGG" id="tth:TT_C1408"/>
<dbReference type="eggNOG" id="COG0825">
    <property type="taxonomic scope" value="Bacteria"/>
</dbReference>
<dbReference type="HOGENOM" id="CLU_015486_0_2_0"/>
<dbReference type="OrthoDB" id="9808023at2"/>
<dbReference type="UniPathway" id="UPA00655">
    <property type="reaction ID" value="UER00711"/>
</dbReference>
<dbReference type="Proteomes" id="UP000000592">
    <property type="component" value="Chromosome"/>
</dbReference>
<dbReference type="GO" id="GO:0009317">
    <property type="term" value="C:acetyl-CoA carboxylase complex"/>
    <property type="evidence" value="ECO:0007669"/>
    <property type="project" value="InterPro"/>
</dbReference>
<dbReference type="GO" id="GO:0003989">
    <property type="term" value="F:acetyl-CoA carboxylase activity"/>
    <property type="evidence" value="ECO:0007669"/>
    <property type="project" value="InterPro"/>
</dbReference>
<dbReference type="GO" id="GO:0005524">
    <property type="term" value="F:ATP binding"/>
    <property type="evidence" value="ECO:0007669"/>
    <property type="project" value="UniProtKB-KW"/>
</dbReference>
<dbReference type="GO" id="GO:0016743">
    <property type="term" value="F:carboxyl- or carbamoyltransferase activity"/>
    <property type="evidence" value="ECO:0007669"/>
    <property type="project" value="UniProtKB-UniRule"/>
</dbReference>
<dbReference type="GO" id="GO:0006633">
    <property type="term" value="P:fatty acid biosynthetic process"/>
    <property type="evidence" value="ECO:0007669"/>
    <property type="project" value="UniProtKB-KW"/>
</dbReference>
<dbReference type="GO" id="GO:2001295">
    <property type="term" value="P:malonyl-CoA biosynthetic process"/>
    <property type="evidence" value="ECO:0007669"/>
    <property type="project" value="UniProtKB-UniRule"/>
</dbReference>
<dbReference type="Gene3D" id="3.90.226.10">
    <property type="entry name" value="2-enoyl-CoA Hydratase, Chain A, domain 1"/>
    <property type="match status" value="1"/>
</dbReference>
<dbReference type="HAMAP" id="MF_00823">
    <property type="entry name" value="AcetylCoA_CT_alpha"/>
    <property type="match status" value="1"/>
</dbReference>
<dbReference type="InterPro" id="IPR001095">
    <property type="entry name" value="Acetyl_CoA_COase_a_su"/>
</dbReference>
<dbReference type="InterPro" id="IPR029045">
    <property type="entry name" value="ClpP/crotonase-like_dom_sf"/>
</dbReference>
<dbReference type="InterPro" id="IPR011763">
    <property type="entry name" value="COA_CT_C"/>
</dbReference>
<dbReference type="NCBIfam" id="TIGR00513">
    <property type="entry name" value="accA"/>
    <property type="match status" value="1"/>
</dbReference>
<dbReference type="NCBIfam" id="NF041504">
    <property type="entry name" value="AccA_sub"/>
    <property type="match status" value="1"/>
</dbReference>
<dbReference type="NCBIfam" id="NF004344">
    <property type="entry name" value="PRK05724.1"/>
    <property type="match status" value="1"/>
</dbReference>
<dbReference type="PANTHER" id="PTHR42853">
    <property type="entry name" value="ACETYL-COENZYME A CARBOXYLASE CARBOXYL TRANSFERASE SUBUNIT ALPHA"/>
    <property type="match status" value="1"/>
</dbReference>
<dbReference type="PANTHER" id="PTHR42853:SF3">
    <property type="entry name" value="ACETYL-COENZYME A CARBOXYLASE CARBOXYL TRANSFERASE SUBUNIT ALPHA, CHLOROPLASTIC"/>
    <property type="match status" value="1"/>
</dbReference>
<dbReference type="Pfam" id="PF03255">
    <property type="entry name" value="ACCA"/>
    <property type="match status" value="1"/>
</dbReference>
<dbReference type="PRINTS" id="PR01069">
    <property type="entry name" value="ACCCTRFRASEA"/>
</dbReference>
<dbReference type="SUPFAM" id="SSF52096">
    <property type="entry name" value="ClpP/crotonase"/>
    <property type="match status" value="1"/>
</dbReference>
<dbReference type="PROSITE" id="PS50989">
    <property type="entry name" value="COA_CT_CTER"/>
    <property type="match status" value="1"/>
</dbReference>
<reference key="1">
    <citation type="journal article" date="2004" name="Nat. Biotechnol.">
        <title>The genome sequence of the extreme thermophile Thermus thermophilus.</title>
        <authorList>
            <person name="Henne A."/>
            <person name="Brueggemann H."/>
            <person name="Raasch C."/>
            <person name="Wiezer A."/>
            <person name="Hartsch T."/>
            <person name="Liesegang H."/>
            <person name="Johann A."/>
            <person name="Lienard T."/>
            <person name="Gohl O."/>
            <person name="Martinez-Arias R."/>
            <person name="Jacobi C."/>
            <person name="Starkuviene V."/>
            <person name="Schlenczeck S."/>
            <person name="Dencker S."/>
            <person name="Huber R."/>
            <person name="Klenk H.-P."/>
            <person name="Kramer W."/>
            <person name="Merkl R."/>
            <person name="Gottschalk G."/>
            <person name="Fritz H.-J."/>
        </authorList>
    </citation>
    <scope>NUCLEOTIDE SEQUENCE [LARGE SCALE GENOMIC DNA]</scope>
    <source>
        <strain>ATCC BAA-163 / DSM 7039 / HB27</strain>
    </source>
</reference>
<gene>
    <name evidence="1" type="primary">accA</name>
    <name type="ordered locus">TT_C1408</name>
</gene>
<sequence>MKSPFWSWNGRIAELKETAKATGVDLEAEIRLLEERLARLRKETYENLTPWQRVQLARAPGRPTTLDVLEKAFQDFIELHGDRAFADDPAIVGGLAYLEGEKVVVVGHQKGRDTKENLQRNFGMPHPEGYRKAMRLMDLADRFGYPFLTFVDTPGAYPGVSAEERGQAWVIAQSIQRMSRLRVPAVTVILGEGGSGGALAIAVANRVLILENAWYSVISPESCAAILWRDAKEAPKAAEALKLTAKDLLQLKVVDAIVPEPEGGAHKDPDRAIRNIKEALLKALEELKGLSPEALYEDRYRRFRSLGAFAEP</sequence>